<dbReference type="EC" id="2.8.4.4" evidence="1"/>
<dbReference type="EMBL" id="CP000868">
    <property type="protein sequence ID" value="ABX15176.1"/>
    <property type="status" value="ALT_INIT"/>
    <property type="molecule type" value="Genomic_DNA"/>
</dbReference>
<dbReference type="EMBL" id="AP009385">
    <property type="protein sequence ID" value="BAG43674.1"/>
    <property type="molecule type" value="Genomic_DNA"/>
</dbReference>
<dbReference type="RefSeq" id="WP_012467627.1">
    <property type="nucleotide sequence ID" value="NC_010084.1"/>
</dbReference>
<dbReference type="SMR" id="A9AH21"/>
<dbReference type="STRING" id="395019.BMULJ_01754"/>
<dbReference type="KEGG" id="bmj:BMULJ_01754"/>
<dbReference type="KEGG" id="bmu:Bmul_1488"/>
<dbReference type="eggNOG" id="COG0621">
    <property type="taxonomic scope" value="Bacteria"/>
</dbReference>
<dbReference type="HOGENOM" id="CLU_018697_0_0_4"/>
<dbReference type="Proteomes" id="UP000008815">
    <property type="component" value="Chromosome 1"/>
</dbReference>
<dbReference type="GO" id="GO:0005829">
    <property type="term" value="C:cytosol"/>
    <property type="evidence" value="ECO:0007669"/>
    <property type="project" value="TreeGrafter"/>
</dbReference>
<dbReference type="GO" id="GO:0051539">
    <property type="term" value="F:4 iron, 4 sulfur cluster binding"/>
    <property type="evidence" value="ECO:0007669"/>
    <property type="project" value="UniProtKB-UniRule"/>
</dbReference>
<dbReference type="GO" id="GO:0035599">
    <property type="term" value="F:aspartic acid methylthiotransferase activity"/>
    <property type="evidence" value="ECO:0007669"/>
    <property type="project" value="TreeGrafter"/>
</dbReference>
<dbReference type="GO" id="GO:0046872">
    <property type="term" value="F:metal ion binding"/>
    <property type="evidence" value="ECO:0007669"/>
    <property type="project" value="UniProtKB-KW"/>
</dbReference>
<dbReference type="GO" id="GO:0103039">
    <property type="term" value="F:protein methylthiotransferase activity"/>
    <property type="evidence" value="ECO:0007669"/>
    <property type="project" value="UniProtKB-EC"/>
</dbReference>
<dbReference type="GO" id="GO:0006400">
    <property type="term" value="P:tRNA modification"/>
    <property type="evidence" value="ECO:0007669"/>
    <property type="project" value="InterPro"/>
</dbReference>
<dbReference type="CDD" id="cd01335">
    <property type="entry name" value="Radical_SAM"/>
    <property type="match status" value="1"/>
</dbReference>
<dbReference type="FunFam" id="3.40.50.12160:FF:000002">
    <property type="entry name" value="Ribosomal protein S12 methylthiotransferase RimO"/>
    <property type="match status" value="1"/>
</dbReference>
<dbReference type="FunFam" id="3.80.30.20:FF:000001">
    <property type="entry name" value="tRNA-2-methylthio-N(6)-dimethylallyladenosine synthase 2"/>
    <property type="match status" value="1"/>
</dbReference>
<dbReference type="Gene3D" id="3.40.50.12160">
    <property type="entry name" value="Methylthiotransferase, N-terminal domain"/>
    <property type="match status" value="1"/>
</dbReference>
<dbReference type="Gene3D" id="2.40.50.140">
    <property type="entry name" value="Nucleic acid-binding proteins"/>
    <property type="match status" value="1"/>
</dbReference>
<dbReference type="Gene3D" id="3.80.30.20">
    <property type="entry name" value="tm_1862 like domain"/>
    <property type="match status" value="1"/>
</dbReference>
<dbReference type="HAMAP" id="MF_01865">
    <property type="entry name" value="MTTase_RimO"/>
    <property type="match status" value="1"/>
</dbReference>
<dbReference type="InterPro" id="IPR006638">
    <property type="entry name" value="Elp3/MiaA/NifB-like_rSAM"/>
</dbReference>
<dbReference type="InterPro" id="IPR005839">
    <property type="entry name" value="Methylthiotransferase"/>
</dbReference>
<dbReference type="InterPro" id="IPR020612">
    <property type="entry name" value="Methylthiotransferase_CS"/>
</dbReference>
<dbReference type="InterPro" id="IPR013848">
    <property type="entry name" value="Methylthiotransferase_N"/>
</dbReference>
<dbReference type="InterPro" id="IPR038135">
    <property type="entry name" value="Methylthiotransferase_N_sf"/>
</dbReference>
<dbReference type="InterPro" id="IPR012340">
    <property type="entry name" value="NA-bd_OB-fold"/>
</dbReference>
<dbReference type="InterPro" id="IPR005840">
    <property type="entry name" value="Ribosomal_uS12_MeSTrfase_RimO"/>
</dbReference>
<dbReference type="InterPro" id="IPR007197">
    <property type="entry name" value="rSAM"/>
</dbReference>
<dbReference type="InterPro" id="IPR023404">
    <property type="entry name" value="rSAM_horseshoe"/>
</dbReference>
<dbReference type="InterPro" id="IPR002792">
    <property type="entry name" value="TRAM_dom"/>
</dbReference>
<dbReference type="NCBIfam" id="TIGR01125">
    <property type="entry name" value="30S ribosomal protein S12 methylthiotransferase RimO"/>
    <property type="match status" value="1"/>
</dbReference>
<dbReference type="NCBIfam" id="TIGR00089">
    <property type="entry name" value="MiaB/RimO family radical SAM methylthiotransferase"/>
    <property type="match status" value="1"/>
</dbReference>
<dbReference type="PANTHER" id="PTHR43837">
    <property type="entry name" value="RIBOSOMAL PROTEIN S12 METHYLTHIOTRANSFERASE RIMO"/>
    <property type="match status" value="1"/>
</dbReference>
<dbReference type="PANTHER" id="PTHR43837:SF1">
    <property type="entry name" value="RIBOSOMAL PROTEIN US12 METHYLTHIOTRANSFERASE RIMO"/>
    <property type="match status" value="1"/>
</dbReference>
<dbReference type="Pfam" id="PF04055">
    <property type="entry name" value="Radical_SAM"/>
    <property type="match status" value="1"/>
</dbReference>
<dbReference type="Pfam" id="PF18693">
    <property type="entry name" value="TRAM_2"/>
    <property type="match status" value="1"/>
</dbReference>
<dbReference type="Pfam" id="PF00919">
    <property type="entry name" value="UPF0004"/>
    <property type="match status" value="1"/>
</dbReference>
<dbReference type="SFLD" id="SFLDG01082">
    <property type="entry name" value="B12-binding_domain_containing"/>
    <property type="match status" value="1"/>
</dbReference>
<dbReference type="SFLD" id="SFLDG01061">
    <property type="entry name" value="methylthiotransferase"/>
    <property type="match status" value="1"/>
</dbReference>
<dbReference type="SFLD" id="SFLDF00274">
    <property type="entry name" value="ribosomal_protein_S12_methylth"/>
    <property type="match status" value="1"/>
</dbReference>
<dbReference type="SMART" id="SM00729">
    <property type="entry name" value="Elp3"/>
    <property type="match status" value="1"/>
</dbReference>
<dbReference type="SUPFAM" id="SSF102114">
    <property type="entry name" value="Radical SAM enzymes"/>
    <property type="match status" value="1"/>
</dbReference>
<dbReference type="PROSITE" id="PS51449">
    <property type="entry name" value="MTTASE_N"/>
    <property type="match status" value="1"/>
</dbReference>
<dbReference type="PROSITE" id="PS01278">
    <property type="entry name" value="MTTASE_RADICAL"/>
    <property type="match status" value="1"/>
</dbReference>
<dbReference type="PROSITE" id="PS51918">
    <property type="entry name" value="RADICAL_SAM"/>
    <property type="match status" value="1"/>
</dbReference>
<dbReference type="PROSITE" id="PS50926">
    <property type="entry name" value="TRAM"/>
    <property type="match status" value="1"/>
</dbReference>
<accession>A9AH21</accession>
<accession>B3D0W2</accession>
<sequence length="453" mass="49429">MSQSPKVGFVSLGCPKALVDSEQIITQLRAEGYEISGTYDGADLVVVNTCGFIDEAVQESLDAIGEALTENGKVIVTGCLGAKKSASGSGLIEEVHPKVLAVTGPHAVGEVMQAVHSHLPKPHDPFVDLVPPAGIKLTPRHYAYLKISEGCNHRCTFCIIPSMRGDLVSRPVAEVMLEAENLFKSGVKELLVISQDTSAYGVDVKYRTGFWNGKPIKTRMTDLVAALGELAAQYGAWVRLHYVYPYPSVDEVIPLMAEGPFKGHVLPYLDVPFQHAHPDVLKRMKRPANAEKVLERVQKWREICPDLTIRSTFIAGFPGETEAQFETLLDFIREAELDRVGCFAYSPVEGASANELDGALPDDVREERRARFMEVAEEVSARRIARKVGKTLKVLIDEVSDEGGIGRTAADAPEIDGVVYVEPATKASKRYKVGDFVSVKITGADGHDLWGEV</sequence>
<comment type="function">
    <text evidence="1">Catalyzes the methylthiolation of an aspartic acid residue of ribosomal protein uS12.</text>
</comment>
<comment type="catalytic activity">
    <reaction evidence="1">
        <text>L-aspartate(89)-[ribosomal protein uS12]-hydrogen + (sulfur carrier)-SH + AH2 + 2 S-adenosyl-L-methionine = 3-methylsulfanyl-L-aspartate(89)-[ribosomal protein uS12]-hydrogen + (sulfur carrier)-H + 5'-deoxyadenosine + L-methionine + A + S-adenosyl-L-homocysteine + 2 H(+)</text>
        <dbReference type="Rhea" id="RHEA:37087"/>
        <dbReference type="Rhea" id="RHEA-COMP:10460"/>
        <dbReference type="Rhea" id="RHEA-COMP:10461"/>
        <dbReference type="Rhea" id="RHEA-COMP:14737"/>
        <dbReference type="Rhea" id="RHEA-COMP:14739"/>
        <dbReference type="ChEBI" id="CHEBI:13193"/>
        <dbReference type="ChEBI" id="CHEBI:15378"/>
        <dbReference type="ChEBI" id="CHEBI:17319"/>
        <dbReference type="ChEBI" id="CHEBI:17499"/>
        <dbReference type="ChEBI" id="CHEBI:29917"/>
        <dbReference type="ChEBI" id="CHEBI:29961"/>
        <dbReference type="ChEBI" id="CHEBI:57844"/>
        <dbReference type="ChEBI" id="CHEBI:57856"/>
        <dbReference type="ChEBI" id="CHEBI:59789"/>
        <dbReference type="ChEBI" id="CHEBI:64428"/>
        <dbReference type="ChEBI" id="CHEBI:73599"/>
        <dbReference type="EC" id="2.8.4.4"/>
    </reaction>
</comment>
<comment type="cofactor">
    <cofactor evidence="1">
        <name>[4Fe-4S] cluster</name>
        <dbReference type="ChEBI" id="CHEBI:49883"/>
    </cofactor>
    <text evidence="1">Binds 2 [4Fe-4S] clusters. One cluster is coordinated with 3 cysteines and an exchangeable S-adenosyl-L-methionine.</text>
</comment>
<comment type="subcellular location">
    <subcellularLocation>
        <location evidence="1">Cytoplasm</location>
    </subcellularLocation>
</comment>
<comment type="similarity">
    <text evidence="1">Belongs to the methylthiotransferase family. RimO subfamily.</text>
</comment>
<comment type="sequence caution" evidence="3">
    <conflict type="erroneous initiation">
        <sequence resource="EMBL-CDS" id="ABX15176"/>
    </conflict>
</comment>
<proteinExistence type="inferred from homology"/>
<protein>
    <recommendedName>
        <fullName evidence="1">Ribosomal protein uS12 methylthiotransferase RimO</fullName>
        <shortName evidence="1">uS12 MTTase</shortName>
        <shortName evidence="1">uS12 methylthiotransferase</shortName>
        <ecNumber evidence="1">2.8.4.4</ecNumber>
    </recommendedName>
    <alternativeName>
        <fullName evidence="1">Ribosomal protein uS12 (aspartate-C(3))-methylthiotransferase</fullName>
    </alternativeName>
    <alternativeName>
        <fullName evidence="1">Ribosome maturation factor RimO</fullName>
    </alternativeName>
</protein>
<reference key="1">
    <citation type="submission" date="2007-10" db="EMBL/GenBank/DDBJ databases">
        <title>Complete sequence of chromosome 1 of Burkholderia multivorans ATCC 17616.</title>
        <authorList>
            <person name="Copeland A."/>
            <person name="Lucas S."/>
            <person name="Lapidus A."/>
            <person name="Barry K."/>
            <person name="Glavina del Rio T."/>
            <person name="Dalin E."/>
            <person name="Tice H."/>
            <person name="Pitluck S."/>
            <person name="Chain P."/>
            <person name="Malfatti S."/>
            <person name="Shin M."/>
            <person name="Vergez L."/>
            <person name="Schmutz J."/>
            <person name="Larimer F."/>
            <person name="Land M."/>
            <person name="Hauser L."/>
            <person name="Kyrpides N."/>
            <person name="Kim E."/>
            <person name="Tiedje J."/>
            <person name="Richardson P."/>
        </authorList>
    </citation>
    <scope>NUCLEOTIDE SEQUENCE [LARGE SCALE GENOMIC DNA]</scope>
    <source>
        <strain>ATCC 17616 / 249</strain>
    </source>
</reference>
<reference key="2">
    <citation type="submission" date="2007-04" db="EMBL/GenBank/DDBJ databases">
        <title>Complete genome sequence of Burkholderia multivorans ATCC 17616.</title>
        <authorList>
            <person name="Ohtsubo Y."/>
            <person name="Yamashita A."/>
            <person name="Kurokawa K."/>
            <person name="Takami H."/>
            <person name="Yuhara S."/>
            <person name="Nishiyama E."/>
            <person name="Endo R."/>
            <person name="Miyazaki R."/>
            <person name="Ono A."/>
            <person name="Yano K."/>
            <person name="Ito M."/>
            <person name="Sota M."/>
            <person name="Yuji N."/>
            <person name="Hattori M."/>
            <person name="Tsuda M."/>
        </authorList>
    </citation>
    <scope>NUCLEOTIDE SEQUENCE [LARGE SCALE GENOMIC DNA]</scope>
    <source>
        <strain>ATCC 17616 / 249</strain>
    </source>
</reference>
<keyword id="KW-0004">4Fe-4S</keyword>
<keyword id="KW-0963">Cytoplasm</keyword>
<keyword id="KW-0408">Iron</keyword>
<keyword id="KW-0411">Iron-sulfur</keyword>
<keyword id="KW-0479">Metal-binding</keyword>
<keyword id="KW-1185">Reference proteome</keyword>
<keyword id="KW-0949">S-adenosyl-L-methionine</keyword>
<keyword id="KW-0808">Transferase</keyword>
<gene>
    <name evidence="1" type="primary">rimO</name>
    <name type="ordered locus">Bmul_1488</name>
    <name type="ordered locus">BMULJ_01754</name>
</gene>
<organism>
    <name type="scientific">Burkholderia multivorans (strain ATCC 17616 / 249)</name>
    <dbReference type="NCBI Taxonomy" id="395019"/>
    <lineage>
        <taxon>Bacteria</taxon>
        <taxon>Pseudomonadati</taxon>
        <taxon>Pseudomonadota</taxon>
        <taxon>Betaproteobacteria</taxon>
        <taxon>Burkholderiales</taxon>
        <taxon>Burkholderiaceae</taxon>
        <taxon>Burkholderia</taxon>
        <taxon>Burkholderia cepacia complex</taxon>
    </lineage>
</organism>
<evidence type="ECO:0000255" key="1">
    <source>
        <dbReference type="HAMAP-Rule" id="MF_01865"/>
    </source>
</evidence>
<evidence type="ECO:0000255" key="2">
    <source>
        <dbReference type="PROSITE-ProRule" id="PRU01266"/>
    </source>
</evidence>
<evidence type="ECO:0000305" key="3"/>
<feature type="chain" id="PRO_0000374738" description="Ribosomal protein uS12 methylthiotransferase RimO">
    <location>
        <begin position="1"/>
        <end position="453"/>
    </location>
</feature>
<feature type="domain" description="MTTase N-terminal" evidence="1">
    <location>
        <begin position="5"/>
        <end position="120"/>
    </location>
</feature>
<feature type="domain" description="Radical SAM core" evidence="2">
    <location>
        <begin position="137"/>
        <end position="382"/>
    </location>
</feature>
<feature type="domain" description="TRAM" evidence="1">
    <location>
        <begin position="385"/>
        <end position="453"/>
    </location>
</feature>
<feature type="binding site" evidence="1">
    <location>
        <position position="14"/>
    </location>
    <ligand>
        <name>[4Fe-4S] cluster</name>
        <dbReference type="ChEBI" id="CHEBI:49883"/>
        <label>1</label>
    </ligand>
</feature>
<feature type="binding site" evidence="1">
    <location>
        <position position="50"/>
    </location>
    <ligand>
        <name>[4Fe-4S] cluster</name>
        <dbReference type="ChEBI" id="CHEBI:49883"/>
        <label>1</label>
    </ligand>
</feature>
<feature type="binding site" evidence="1">
    <location>
        <position position="79"/>
    </location>
    <ligand>
        <name>[4Fe-4S] cluster</name>
        <dbReference type="ChEBI" id="CHEBI:49883"/>
        <label>1</label>
    </ligand>
</feature>
<feature type="binding site" evidence="1">
    <location>
        <position position="151"/>
    </location>
    <ligand>
        <name>[4Fe-4S] cluster</name>
        <dbReference type="ChEBI" id="CHEBI:49883"/>
        <label>2</label>
        <note>4Fe-4S-S-AdoMet</note>
    </ligand>
</feature>
<feature type="binding site" evidence="1">
    <location>
        <position position="155"/>
    </location>
    <ligand>
        <name>[4Fe-4S] cluster</name>
        <dbReference type="ChEBI" id="CHEBI:49883"/>
        <label>2</label>
        <note>4Fe-4S-S-AdoMet</note>
    </ligand>
</feature>
<feature type="binding site" evidence="1">
    <location>
        <position position="158"/>
    </location>
    <ligand>
        <name>[4Fe-4S] cluster</name>
        <dbReference type="ChEBI" id="CHEBI:49883"/>
        <label>2</label>
        <note>4Fe-4S-S-AdoMet</note>
    </ligand>
</feature>
<name>RIMO_BURM1</name>